<name>RL36_STRT2</name>
<protein>
    <recommendedName>
        <fullName evidence="1">Large ribosomal subunit protein bL36</fullName>
    </recommendedName>
    <alternativeName>
        <fullName evidence="2">50S ribosomal protein L36</fullName>
    </alternativeName>
</protein>
<accession>Q5M2D6</accession>
<dbReference type="EMBL" id="CP000023">
    <property type="protein sequence ID" value="AAV61509.1"/>
    <property type="molecule type" value="Genomic_DNA"/>
</dbReference>
<dbReference type="RefSeq" id="WP_000868345.1">
    <property type="nucleotide sequence ID" value="NC_006448.1"/>
</dbReference>
<dbReference type="SMR" id="Q5M2D6"/>
<dbReference type="STRING" id="264199.stu1911"/>
<dbReference type="GeneID" id="93860206"/>
<dbReference type="KEGG" id="stl:stu1911"/>
<dbReference type="eggNOG" id="COG0257">
    <property type="taxonomic scope" value="Bacteria"/>
</dbReference>
<dbReference type="HOGENOM" id="CLU_135723_6_2_9"/>
<dbReference type="Proteomes" id="UP000001170">
    <property type="component" value="Chromosome"/>
</dbReference>
<dbReference type="GO" id="GO:0005737">
    <property type="term" value="C:cytoplasm"/>
    <property type="evidence" value="ECO:0007669"/>
    <property type="project" value="UniProtKB-ARBA"/>
</dbReference>
<dbReference type="GO" id="GO:1990904">
    <property type="term" value="C:ribonucleoprotein complex"/>
    <property type="evidence" value="ECO:0007669"/>
    <property type="project" value="UniProtKB-KW"/>
</dbReference>
<dbReference type="GO" id="GO:0005840">
    <property type="term" value="C:ribosome"/>
    <property type="evidence" value="ECO:0007669"/>
    <property type="project" value="UniProtKB-KW"/>
</dbReference>
<dbReference type="GO" id="GO:0003735">
    <property type="term" value="F:structural constituent of ribosome"/>
    <property type="evidence" value="ECO:0007669"/>
    <property type="project" value="InterPro"/>
</dbReference>
<dbReference type="GO" id="GO:0006412">
    <property type="term" value="P:translation"/>
    <property type="evidence" value="ECO:0007669"/>
    <property type="project" value="UniProtKB-UniRule"/>
</dbReference>
<dbReference type="HAMAP" id="MF_00251">
    <property type="entry name" value="Ribosomal_bL36"/>
    <property type="match status" value="1"/>
</dbReference>
<dbReference type="InterPro" id="IPR000473">
    <property type="entry name" value="Ribosomal_bL36"/>
</dbReference>
<dbReference type="InterPro" id="IPR035977">
    <property type="entry name" value="Ribosomal_bL36_sp"/>
</dbReference>
<dbReference type="NCBIfam" id="TIGR01022">
    <property type="entry name" value="rpmJ_bact"/>
    <property type="match status" value="1"/>
</dbReference>
<dbReference type="PANTHER" id="PTHR42888">
    <property type="entry name" value="50S RIBOSOMAL PROTEIN L36, CHLOROPLASTIC"/>
    <property type="match status" value="1"/>
</dbReference>
<dbReference type="PANTHER" id="PTHR42888:SF1">
    <property type="entry name" value="LARGE RIBOSOMAL SUBUNIT PROTEIN BL36C"/>
    <property type="match status" value="1"/>
</dbReference>
<dbReference type="Pfam" id="PF00444">
    <property type="entry name" value="Ribosomal_L36"/>
    <property type="match status" value="1"/>
</dbReference>
<dbReference type="SUPFAM" id="SSF57840">
    <property type="entry name" value="Ribosomal protein L36"/>
    <property type="match status" value="1"/>
</dbReference>
<dbReference type="PROSITE" id="PS00828">
    <property type="entry name" value="RIBOSOMAL_L36"/>
    <property type="match status" value="1"/>
</dbReference>
<gene>
    <name evidence="1" type="primary">rpmJ</name>
    <name type="ordered locus">stu1911</name>
</gene>
<keyword id="KW-1185">Reference proteome</keyword>
<keyword id="KW-0687">Ribonucleoprotein</keyword>
<keyword id="KW-0689">Ribosomal protein</keyword>
<reference key="1">
    <citation type="journal article" date="2004" name="Nat. Biotechnol.">
        <title>Complete sequence and comparative genome analysis of the dairy bacterium Streptococcus thermophilus.</title>
        <authorList>
            <person name="Bolotin A."/>
            <person name="Quinquis B."/>
            <person name="Renault P."/>
            <person name="Sorokin A."/>
            <person name="Ehrlich S.D."/>
            <person name="Kulakauskas S."/>
            <person name="Lapidus A."/>
            <person name="Goltsman E."/>
            <person name="Mazur M."/>
            <person name="Pusch G.D."/>
            <person name="Fonstein M."/>
            <person name="Overbeek R."/>
            <person name="Kyprides N."/>
            <person name="Purnelle B."/>
            <person name="Prozzi D."/>
            <person name="Ngui K."/>
            <person name="Masuy D."/>
            <person name="Hancy F."/>
            <person name="Burteau S."/>
            <person name="Boutry M."/>
            <person name="Delcour J."/>
            <person name="Goffeau A."/>
            <person name="Hols P."/>
        </authorList>
    </citation>
    <scope>NUCLEOTIDE SEQUENCE [LARGE SCALE GENOMIC DNA]</scope>
    <source>
        <strain>ATCC BAA-250 / LMG 18311</strain>
    </source>
</reference>
<comment type="similarity">
    <text evidence="1">Belongs to the bacterial ribosomal protein bL36 family.</text>
</comment>
<evidence type="ECO:0000255" key="1">
    <source>
        <dbReference type="HAMAP-Rule" id="MF_00251"/>
    </source>
</evidence>
<evidence type="ECO:0000305" key="2"/>
<proteinExistence type="inferred from homology"/>
<organism>
    <name type="scientific">Streptococcus thermophilus (strain ATCC BAA-250 / LMG 18311)</name>
    <dbReference type="NCBI Taxonomy" id="264199"/>
    <lineage>
        <taxon>Bacteria</taxon>
        <taxon>Bacillati</taxon>
        <taxon>Bacillota</taxon>
        <taxon>Bacilli</taxon>
        <taxon>Lactobacillales</taxon>
        <taxon>Streptococcaceae</taxon>
        <taxon>Streptococcus</taxon>
    </lineage>
</organism>
<feature type="chain" id="PRO_0000302314" description="Large ribosomal subunit protein bL36">
    <location>
        <begin position="1"/>
        <end position="38"/>
    </location>
</feature>
<sequence>MKVRPSVKPICEYCKVIRRNGRVMVICPTNPKHKQRQG</sequence>